<accession>Q8S8D8</accession>
<accession>F4IVH7</accession>
<comment type="similarity">
    <text evidence="1">Belongs to the UPF0725 (EMB2204) family.</text>
</comment>
<comment type="sequence caution" evidence="1">
    <conflict type="erroneous gene model prediction">
        <sequence resource="EMBL-CDS" id="AEC07048"/>
    </conflict>
</comment>
<proteinExistence type="inferred from homology"/>
<dbReference type="EMBL" id="AC007048">
    <property type="protein sequence ID" value="AAM15368.1"/>
    <property type="molecule type" value="Genomic_DNA"/>
</dbReference>
<dbReference type="EMBL" id="CP002685">
    <property type="protein sequence ID" value="AEC07048.1"/>
    <property type="status" value="ALT_SEQ"/>
    <property type="molecule type" value="Genomic_DNA"/>
</dbReference>
<dbReference type="EMBL" id="CP002685">
    <property type="protein sequence ID" value="ANM62635.1"/>
    <property type="molecule type" value="Genomic_DNA"/>
</dbReference>
<dbReference type="RefSeq" id="NP_001324778.1">
    <property type="nucleotide sequence ID" value="NM_001335702.1"/>
</dbReference>
<dbReference type="RefSeq" id="NP_179654.2">
    <property type="nucleotide sequence ID" value="NM_127626.2"/>
</dbReference>
<dbReference type="STRING" id="3702.Q8S8D8"/>
<dbReference type="PaxDb" id="3702-AT2G20625.1"/>
<dbReference type="EnsemblPlants" id="AT2G20625.2">
    <property type="protein sequence ID" value="AT2G20625.2"/>
    <property type="gene ID" value="AT2G20625"/>
</dbReference>
<dbReference type="GeneID" id="816589"/>
<dbReference type="Gramene" id="AT2G20625.2">
    <property type="protein sequence ID" value="AT2G20625.2"/>
    <property type="gene ID" value="AT2G20625"/>
</dbReference>
<dbReference type="KEGG" id="ath:AT2G20625"/>
<dbReference type="Araport" id="AT2G20625"/>
<dbReference type="TAIR" id="AT2G20625"/>
<dbReference type="eggNOG" id="KOG4585">
    <property type="taxonomic scope" value="Eukaryota"/>
</dbReference>
<dbReference type="HOGENOM" id="CLU_1505494_0_0_1"/>
<dbReference type="InParanoid" id="Q8S8D8"/>
<dbReference type="PhylomeDB" id="Q8S8D8"/>
<dbReference type="PRO" id="PR:Q8S8D8"/>
<dbReference type="Proteomes" id="UP000006548">
    <property type="component" value="Chromosome 2"/>
</dbReference>
<dbReference type="ExpressionAtlas" id="Q8S8D8">
    <property type="expression patterns" value="baseline and differential"/>
</dbReference>
<dbReference type="InterPro" id="IPR006462">
    <property type="entry name" value="MS5"/>
</dbReference>
<dbReference type="Pfam" id="PF04776">
    <property type="entry name" value="protein_MS5"/>
    <property type="match status" value="1"/>
</dbReference>
<evidence type="ECO:0000305" key="1"/>
<reference key="1">
    <citation type="journal article" date="1999" name="Nature">
        <title>Sequence and analysis of chromosome 2 of the plant Arabidopsis thaliana.</title>
        <authorList>
            <person name="Lin X."/>
            <person name="Kaul S."/>
            <person name="Rounsley S.D."/>
            <person name="Shea T.P."/>
            <person name="Benito M.-I."/>
            <person name="Town C.D."/>
            <person name="Fujii C.Y."/>
            <person name="Mason T.M."/>
            <person name="Bowman C.L."/>
            <person name="Barnstead M.E."/>
            <person name="Feldblyum T.V."/>
            <person name="Buell C.R."/>
            <person name="Ketchum K.A."/>
            <person name="Lee J.J."/>
            <person name="Ronning C.M."/>
            <person name="Koo H.L."/>
            <person name="Moffat K.S."/>
            <person name="Cronin L.A."/>
            <person name="Shen M."/>
            <person name="Pai G."/>
            <person name="Van Aken S."/>
            <person name="Umayam L."/>
            <person name="Tallon L.J."/>
            <person name="Gill J.E."/>
            <person name="Adams M.D."/>
            <person name="Carrera A.J."/>
            <person name="Creasy T.H."/>
            <person name="Goodman H.M."/>
            <person name="Somerville C.R."/>
            <person name="Copenhaver G.P."/>
            <person name="Preuss D."/>
            <person name="Nierman W.C."/>
            <person name="White O."/>
            <person name="Eisen J.A."/>
            <person name="Salzberg S.L."/>
            <person name="Fraser C.M."/>
            <person name="Venter J.C."/>
        </authorList>
    </citation>
    <scope>NUCLEOTIDE SEQUENCE [LARGE SCALE GENOMIC DNA]</scope>
    <source>
        <strain>cv. Columbia</strain>
    </source>
</reference>
<reference key="2">
    <citation type="journal article" date="2017" name="Plant J.">
        <title>Araport11: a complete reannotation of the Arabidopsis thaliana reference genome.</title>
        <authorList>
            <person name="Cheng C.Y."/>
            <person name="Krishnakumar V."/>
            <person name="Chan A.P."/>
            <person name="Thibaud-Nissen F."/>
            <person name="Schobel S."/>
            <person name="Town C.D."/>
        </authorList>
    </citation>
    <scope>GENOME REANNOTATION</scope>
    <source>
        <strain>cv. Columbia</strain>
    </source>
</reference>
<gene>
    <name type="ordered locus">At2g20625</name>
    <name type="ORF">F23N11.15</name>
</gene>
<name>Y2265_ARATH</name>
<feature type="chain" id="PRO_0000363133" description="UPF0725 protein At2g20625">
    <location>
        <begin position="1"/>
        <end position="190"/>
    </location>
</feature>
<sequence>MVVEAYVKQTEALEKKNRIVELMLEREHASSVKSVLETLNGLPGVRMWSPFHKTSIDHLIADEASRQGFIAFPRAEHKRTGEEDLIWDPNAVDDFCRGDMHKWLEEMPNYCYYNCAGEGIGFARQRMALFIYALQRAYLPFEMKKVVVQTREDIESSMKLKASNAIFYMNFKAYGGPQCRGIVRKQVIED</sequence>
<organism>
    <name type="scientific">Arabidopsis thaliana</name>
    <name type="common">Mouse-ear cress</name>
    <dbReference type="NCBI Taxonomy" id="3702"/>
    <lineage>
        <taxon>Eukaryota</taxon>
        <taxon>Viridiplantae</taxon>
        <taxon>Streptophyta</taxon>
        <taxon>Embryophyta</taxon>
        <taxon>Tracheophyta</taxon>
        <taxon>Spermatophyta</taxon>
        <taxon>Magnoliopsida</taxon>
        <taxon>eudicotyledons</taxon>
        <taxon>Gunneridae</taxon>
        <taxon>Pentapetalae</taxon>
        <taxon>rosids</taxon>
        <taxon>malvids</taxon>
        <taxon>Brassicales</taxon>
        <taxon>Brassicaceae</taxon>
        <taxon>Camelineae</taxon>
        <taxon>Arabidopsis</taxon>
    </lineage>
</organism>
<keyword id="KW-1185">Reference proteome</keyword>
<protein>
    <recommendedName>
        <fullName>UPF0725 protein At2g20625</fullName>
    </recommendedName>
</protein>